<name>VP6_ROTBN</name>
<evidence type="ECO:0000255" key="1">
    <source>
        <dbReference type="HAMAP-Rule" id="MF_04129"/>
    </source>
</evidence>
<evidence type="ECO:0000305" key="2"/>
<evidence type="ECO:0007744" key="3">
    <source>
        <dbReference type="PDB" id="4F5X"/>
    </source>
</evidence>
<feature type="chain" id="PRO_0000368173" description="Intermediate capsid protein VP6">
    <location>
        <begin position="1"/>
        <end position="397"/>
    </location>
</feature>
<feature type="region of interest" description="Interaction with the inner capsid protein VP2" evidence="1">
    <location>
        <begin position="62"/>
        <end position="73"/>
    </location>
</feature>
<feature type="binding site" evidence="1">
    <location>
        <position position="153"/>
    </location>
    <ligand>
        <name>Zn(2+)</name>
        <dbReference type="ChEBI" id="CHEBI:29105"/>
        <note>ligand shared between all trimeric partners</note>
    </ligand>
</feature>
<feature type="binding site" evidence="1">
    <location>
        <position position="266"/>
    </location>
    <ligand>
        <name>Ca(2+)</name>
        <dbReference type="ChEBI" id="CHEBI:29108"/>
    </ligand>
</feature>
<feature type="binding site" evidence="1">
    <location>
        <position position="286"/>
    </location>
    <ligand>
        <name>Ca(2+)</name>
        <dbReference type="ChEBI" id="CHEBI:29108"/>
    </ligand>
</feature>
<feature type="sequence conflict" description="In Ref. 1; AAK60608." evidence="2" ref="1">
    <original>L</original>
    <variation>I</variation>
    <location>
        <position position="122"/>
    </location>
</feature>
<feature type="sequence conflict" description="In Ref. 1; AAK60608." evidence="2" ref="1">
    <original>N</original>
    <variation>I</variation>
    <location>
        <position position="239"/>
    </location>
</feature>
<feature type="sequence conflict" description="In Ref. 1; AAK60608." evidence="2" ref="1">
    <original>I</original>
    <variation>V</variation>
    <location>
        <position position="281"/>
    </location>
</feature>
<feature type="sequence conflict" description="In Ref. 1; AAK60608." evidence="2" ref="1">
    <original>S</original>
    <variation>R</variation>
    <location>
        <position position="339"/>
    </location>
</feature>
<dbReference type="EMBL" id="AF317127">
    <property type="protein sequence ID" value="AAK60608.1"/>
    <property type="molecule type" value="mRNA"/>
</dbReference>
<dbReference type="EMBL" id="DQ870496">
    <property type="protein sequence ID" value="ABI60863.1"/>
    <property type="molecule type" value="Genomic_RNA"/>
</dbReference>
<dbReference type="PDB" id="4F5X">
    <property type="method" value="X-ray"/>
    <property type="resolution" value="5.00 A"/>
    <property type="chains" value="C/D/E/F/G/H/I/J/K/L/M/N/O=1-397"/>
</dbReference>
<dbReference type="PDBsum" id="4F5X"/>
<dbReference type="SMR" id="A7J3A1"/>
<dbReference type="EvolutionaryTrace" id="A7J3A1"/>
<dbReference type="GO" id="GO:0019031">
    <property type="term" value="C:viral envelope"/>
    <property type="evidence" value="ECO:0007669"/>
    <property type="project" value="UniProtKB-UniRule"/>
</dbReference>
<dbReference type="GO" id="GO:0039626">
    <property type="term" value="C:viral intermediate capsid"/>
    <property type="evidence" value="ECO:0007669"/>
    <property type="project" value="UniProtKB-UniRule"/>
</dbReference>
<dbReference type="GO" id="GO:0046789">
    <property type="term" value="F:host cell surface receptor binding"/>
    <property type="evidence" value="ECO:0007669"/>
    <property type="project" value="UniProtKB-UniRule"/>
</dbReference>
<dbReference type="GO" id="GO:0046872">
    <property type="term" value="F:metal ion binding"/>
    <property type="evidence" value="ECO:0007669"/>
    <property type="project" value="UniProtKB-UniRule"/>
</dbReference>
<dbReference type="GO" id="GO:0005198">
    <property type="term" value="F:structural molecule activity"/>
    <property type="evidence" value="ECO:0007669"/>
    <property type="project" value="UniProtKB-UniRule"/>
</dbReference>
<dbReference type="GO" id="GO:0019064">
    <property type="term" value="P:fusion of virus membrane with host plasma membrane"/>
    <property type="evidence" value="ECO:0007669"/>
    <property type="project" value="UniProtKB-UniRule"/>
</dbReference>
<dbReference type="FunFam" id="2.60.120.170:FF:000001">
    <property type="entry name" value="Intermediate capsid protein VP6"/>
    <property type="match status" value="1"/>
</dbReference>
<dbReference type="Gene3D" id="2.60.120.170">
    <property type="match status" value="1"/>
</dbReference>
<dbReference type="Gene3D" id="1.10.1350.10">
    <property type="entry name" value="Viral capsid alpha domain"/>
    <property type="match status" value="1"/>
</dbReference>
<dbReference type="HAMAP" id="MF_04126">
    <property type="entry name" value="Rota_VP6"/>
    <property type="match status" value="1"/>
</dbReference>
<dbReference type="HAMAP" id="MF_04129">
    <property type="entry name" value="Rota_VP6_A"/>
    <property type="match status" value="1"/>
</dbReference>
<dbReference type="InterPro" id="IPR008980">
    <property type="entry name" value="Capsid_hemagglutn"/>
</dbReference>
<dbReference type="InterPro" id="IPR001385">
    <property type="entry name" value="Rotavirus_A/C_VP6"/>
</dbReference>
<dbReference type="InterPro" id="IPR008935">
    <property type="entry name" value="Virus_capsid_a-hlx_vir"/>
</dbReference>
<dbReference type="Pfam" id="PF00980">
    <property type="entry name" value="Rota_Capsid_VP6"/>
    <property type="match status" value="1"/>
</dbReference>
<dbReference type="SUPFAM" id="SSF48345">
    <property type="entry name" value="A virus capsid protein alpha-helical domain"/>
    <property type="match status" value="1"/>
</dbReference>
<dbReference type="SUPFAM" id="SSF49818">
    <property type="entry name" value="Viral protein domain"/>
    <property type="match status" value="1"/>
</dbReference>
<proteinExistence type="evidence at protein level"/>
<organismHost>
    <name type="scientific">Bos taurus</name>
    <name type="common">Bovine</name>
    <dbReference type="NCBI Taxonomy" id="9913"/>
</organismHost>
<comment type="function">
    <text evidence="1">Intermediate capsid protein that self assembles to form an icosahedral capsid with a T=13 symmetry, which consists of 230 trimers of VP6, with channels at each of its five-fold vertices. This capsid constitutes the middle concentric layer of the viral mature particle. The innermost VP2 capsid and the intermediate VP6 capsid remain intact following cell entry to protect the dsRNA from degradation and to prevent unfavorable antiviral responses in the host cell during all the replication cycle of the virus. Nascent transcripts are transcribed within the structural confines of this double-layered particle (DLP) and are extruded through the channels at the five-fold axes. VP6 is required for the transcription activity of the DLP.</text>
</comment>
<comment type="subunit">
    <text evidence="1">Homotrimer. Interacts with the inner capsid protein VP2. Interacts with the outer capsid glycoprotein VP7. Interacts with the outer capsid protein VP5*.</text>
</comment>
<comment type="subcellular location">
    <subcellularLocation>
        <location evidence="1">Virion</location>
    </subcellularLocation>
    <text evidence="1">Component of the intermediate capsid. Also found in spherical cytoplasmic structures, called virus factories, that appear early after infection and are the site of viral replication and packaging.</text>
</comment>
<comment type="PTM">
    <text evidence="1">The N-terminus is blocked.</text>
</comment>
<comment type="PTM">
    <text evidence="1">Sumoylated with SUMO1 and SUMO2. Sumoylation of viral proteins seems to have a positive role on viral replication.</text>
</comment>
<comment type="miscellaneous">
    <text evidence="1">The VP6 trimer contains a zinc ion located at the center of the molecule. The zinc ion is not essential for either trimerization or transcription activity of the DLP. Zinc-depleted VP6 has an increased sensitivity to proteases.</text>
</comment>
<comment type="similarity">
    <text evidence="1 2">Belongs to the rotavirus VP6 family.</text>
</comment>
<keyword id="KW-0002">3D-structure</keyword>
<keyword id="KW-0106">Calcium</keyword>
<keyword id="KW-0167">Capsid protein</keyword>
<keyword id="KW-1154">Intermediate capsid protein</keyword>
<keyword id="KW-0479">Metal-binding</keyword>
<keyword id="KW-0832">Ubl conjugation</keyword>
<keyword id="KW-0946">Virion</keyword>
<keyword id="KW-0862">Zinc</keyword>
<accession>A7J3A1</accession>
<accession>Q91N57</accession>
<organism>
    <name type="scientific">Rotavirus A (strain RVA/Cow/United States/NCDV-Lincoln/1969/G6P6[1])</name>
    <name type="common">RV-A</name>
    <name type="synonym">Rotavirus A (strain Nebraska calf diarrhea virus)</name>
    <dbReference type="NCBI Taxonomy" id="36439"/>
    <lineage>
        <taxon>Viruses</taxon>
        <taxon>Riboviria</taxon>
        <taxon>Orthornavirae</taxon>
        <taxon>Duplornaviricota</taxon>
        <taxon>Resentoviricetes</taxon>
        <taxon>Reovirales</taxon>
        <taxon>Sedoreoviridae</taxon>
        <taxon>Rotavirus</taxon>
        <taxon>Rotavirus A</taxon>
    </lineage>
</organism>
<sequence length="397" mass="44885">MDVLYSLSKTLKDARDKIVEGTLYSNVSDLIQQFNQMIITMNGNEFQTGGIGNLPIRNWNFDFGLLGTTLLNLDANYVETARNTIDYFVDFVDNVCMDEMVRESQRNGIAPQSDSLRKLSGLKFKRINFDNSSEYIENWNLQNRRQRTGFTFHKPNIFPYSASFTLNRSQPAHDNLMGTMWLNAGSEIQVAGFDYSCAINAPANTQQFEHIVQLRRVLTTATITLLPDAERFSFPRVINSADGATTWYFNPVILRPNNVEVEFLLNGQIINTYQARFGTIIARNFDTIRLSFQLMRPPNMTPAVAALFPNAQPFEHHATVGLTLRIESAVCESVLADASETMLANVTSVRQEYAIPVGPVFPPGMNWTDLITNYSPSREDNLQRVFTVASIRSMLVK</sequence>
<protein>
    <recommendedName>
        <fullName evidence="1">Intermediate capsid protein VP6</fullName>
    </recommendedName>
</protein>
<reference key="1">
    <citation type="submission" date="2000-10" db="EMBL/GenBank/DDBJ databases">
        <title>Antigenic and molecular analysis of group A porcine and bovine rotaviruses isolated in the United States, Venezuela, and South Africa.</title>
        <authorList>
            <person name="Ciarlet M."/>
            <person name="Steele A.D."/>
            <person name="Vasquez E."/>
            <person name="Bertolotti-Ciarlet A."/>
            <person name="Sanchez-Camacho A."/>
            <person name="Pina C.I."/>
            <person name="Pujol F.H."/>
            <person name="Liprandi F."/>
        </authorList>
    </citation>
    <scope>NUCLEOTIDE SEQUENCE [MRNA]</scope>
</reference>
<reference key="2">
    <citation type="journal article" date="2008" name="J. Virol.">
        <title>Full genome-based classification of rotaviruses reveals a common origin between human Wa-Like and porcine rotavirus strains and human DS-1-like and bovine rotavirus strains.</title>
        <authorList>
            <person name="Matthijnssens J."/>
            <person name="Ciarlet M."/>
            <person name="Heiman E.M."/>
            <person name="Arijs I."/>
            <person name="Delbeke T."/>
            <person name="McDonald S.M."/>
            <person name="Palombo E.A."/>
            <person name="Iturriza-Gomara M."/>
            <person name="Maes P."/>
            <person name="Patton J.T."/>
            <person name="Rahman M."/>
            <person name="Van Ranst M."/>
        </authorList>
    </citation>
    <scope>NUCLEOTIDE SEQUENCE [GENOMIC RNA]</scope>
</reference>
<reference evidence="3" key="3">
    <citation type="journal article" date="2013" name="J. Mol. Biol.">
        <title>Location of the dsRNA-dependent polymerase, VP1, in rotavirus particles.</title>
        <authorList>
            <person name="Estrozi L.F."/>
            <person name="Settembre E.C."/>
            <person name="Goret G."/>
            <person name="McClain B."/>
            <person name="Zhang X."/>
            <person name="Chen J.Z."/>
            <person name="Grigorieff N."/>
            <person name="Harrison S.C."/>
        </authorList>
    </citation>
    <scope>X-RAY CRYSTALLOGRAPHY (5.00 ANGSTROMS)</scope>
</reference>